<organism>
    <name type="scientific">Bacillus subtilis (strain 168)</name>
    <dbReference type="NCBI Taxonomy" id="224308"/>
    <lineage>
        <taxon>Bacteria</taxon>
        <taxon>Bacillati</taxon>
        <taxon>Bacillota</taxon>
        <taxon>Bacilli</taxon>
        <taxon>Bacillales</taxon>
        <taxon>Bacillaceae</taxon>
        <taxon>Bacillus</taxon>
    </lineage>
</organism>
<feature type="chain" id="PRO_0000050269" description="Stage III sporulation protein D">
    <location>
        <begin position="1"/>
        <end position="93"/>
    </location>
</feature>
<feature type="domain" description="HTH deoR-type">
    <location>
        <begin position="4"/>
        <end position="75"/>
    </location>
</feature>
<feature type="DNA-binding region" description="H-T-H motif" evidence="1">
    <location>
        <begin position="21"/>
        <end position="40"/>
    </location>
</feature>
<feature type="helix" evidence="2">
    <location>
        <begin position="5"/>
        <end position="19"/>
    </location>
</feature>
<feature type="helix" evidence="2">
    <location>
        <begin position="23"/>
        <end position="30"/>
    </location>
</feature>
<feature type="helix" evidence="2">
    <location>
        <begin position="34"/>
        <end position="41"/>
    </location>
</feature>
<feature type="helix" evidence="2">
    <location>
        <begin position="44"/>
        <end position="48"/>
    </location>
</feature>
<feature type="helix" evidence="2">
    <location>
        <begin position="50"/>
        <end position="65"/>
    </location>
</feature>
<feature type="helix" evidence="2">
    <location>
        <begin position="67"/>
        <end position="80"/>
    </location>
</feature>
<name>SP3D_BACSU</name>
<accession>P15281</accession>
<accession>P94579</accession>
<evidence type="ECO:0000255" key="1"/>
<evidence type="ECO:0007829" key="2">
    <source>
        <dbReference type="PDB" id="2L0K"/>
    </source>
</evidence>
<keyword id="KW-0002">3D-structure</keyword>
<keyword id="KW-0903">Direct protein sequencing</keyword>
<keyword id="KW-0238">DNA-binding</keyword>
<keyword id="KW-1185">Reference proteome</keyword>
<keyword id="KW-0678">Repressor</keyword>
<keyword id="KW-0749">Sporulation</keyword>
<keyword id="KW-0804">Transcription</keyword>
<keyword id="KW-0805">Transcription regulation</keyword>
<dbReference type="EMBL" id="X15520">
    <property type="protein sequence ID" value="CAA33541.1"/>
    <property type="molecule type" value="Genomic_DNA"/>
</dbReference>
<dbReference type="EMBL" id="X52076">
    <property type="protein sequence ID" value="CAA36295.1"/>
    <property type="molecule type" value="Genomic_DNA"/>
</dbReference>
<dbReference type="EMBL" id="Z82987">
    <property type="protein sequence ID" value="CAB05384.1"/>
    <property type="molecule type" value="Genomic_DNA"/>
</dbReference>
<dbReference type="EMBL" id="AL009126">
    <property type="protein sequence ID" value="CAB15659.1"/>
    <property type="molecule type" value="Genomic_DNA"/>
</dbReference>
<dbReference type="PIR" id="A33472">
    <property type="entry name" value="A33472"/>
</dbReference>
<dbReference type="RefSeq" id="NP_391523.1">
    <property type="nucleotide sequence ID" value="NC_000964.3"/>
</dbReference>
<dbReference type="RefSeq" id="WP_003221804.1">
    <property type="nucleotide sequence ID" value="NZ_OZ025638.1"/>
</dbReference>
<dbReference type="PDB" id="2L0K">
    <property type="method" value="NMR"/>
    <property type="chains" value="A=1-93"/>
</dbReference>
<dbReference type="PDBsum" id="2L0K"/>
<dbReference type="SMR" id="P15281"/>
<dbReference type="FunCoup" id="P15281">
    <property type="interactions" value="95"/>
</dbReference>
<dbReference type="STRING" id="224308.BSU36420"/>
<dbReference type="PaxDb" id="224308-BSU36420"/>
<dbReference type="EnsemblBacteria" id="CAB15659">
    <property type="protein sequence ID" value="CAB15659"/>
    <property type="gene ID" value="BSU_36420"/>
</dbReference>
<dbReference type="GeneID" id="92914561"/>
<dbReference type="GeneID" id="936917"/>
<dbReference type="KEGG" id="bsu:BSU36420"/>
<dbReference type="PATRIC" id="fig|224308.179.peg.3942"/>
<dbReference type="eggNOG" id="COG1609">
    <property type="taxonomic scope" value="Bacteria"/>
</dbReference>
<dbReference type="InParanoid" id="P15281"/>
<dbReference type="OrthoDB" id="1682956at2"/>
<dbReference type="PhylomeDB" id="P15281"/>
<dbReference type="BioCyc" id="BSUB:BSU36420-MONOMER"/>
<dbReference type="EvolutionaryTrace" id="P15281"/>
<dbReference type="PRO" id="PR:P15281"/>
<dbReference type="Proteomes" id="UP000001570">
    <property type="component" value="Chromosome"/>
</dbReference>
<dbReference type="GO" id="GO:0003677">
    <property type="term" value="F:DNA binding"/>
    <property type="evidence" value="ECO:0007669"/>
    <property type="project" value="UniProtKB-KW"/>
</dbReference>
<dbReference type="GO" id="GO:0003700">
    <property type="term" value="F:DNA-binding transcription factor activity"/>
    <property type="evidence" value="ECO:0007669"/>
    <property type="project" value="InterPro"/>
</dbReference>
<dbReference type="GO" id="GO:0030435">
    <property type="term" value="P:sporulation resulting in formation of a cellular spore"/>
    <property type="evidence" value="ECO:0007669"/>
    <property type="project" value="UniProtKB-KW"/>
</dbReference>
<dbReference type="InterPro" id="IPR014208">
    <property type="entry name" value="Spore_III_D"/>
</dbReference>
<dbReference type="InterPro" id="IPR018356">
    <property type="entry name" value="Tscrpt_reg_HTH_DeoR_CS"/>
</dbReference>
<dbReference type="NCBIfam" id="TIGR02844">
    <property type="entry name" value="spore_III_D"/>
    <property type="match status" value="1"/>
</dbReference>
<dbReference type="Pfam" id="PF12116">
    <property type="entry name" value="SpoIIID"/>
    <property type="match status" value="1"/>
</dbReference>
<dbReference type="PROSITE" id="PS00894">
    <property type="entry name" value="HTH_DEOR_1"/>
    <property type="match status" value="1"/>
</dbReference>
<proteinExistence type="evidence at protein level"/>
<sequence>MHDYIKERTIKIGKYIVETKKTVRVIAKEFGVSKSTVHKDLTERLPEINPDLANEVKEILDYHKSIRHLRGGEATKLKYKKDEILEGEPVQQS</sequence>
<reference key="1">
    <citation type="journal article" date="1989" name="Genes Dev.">
        <title>Temporal and spatial control of the mother-cell regulatory gene spoIIID of Bacillus subtilis.</title>
        <authorList>
            <person name="Kunkel B."/>
            <person name="Kroos L."/>
            <person name="Poth H."/>
            <person name="Youngman P."/>
            <person name="Losick R."/>
        </authorList>
    </citation>
    <scope>NUCLEOTIDE SEQUENCE [GENOMIC DNA]</scope>
    <source>
        <strain>168 / PY79</strain>
    </source>
</reference>
<reference key="2">
    <citation type="journal article" date="1990" name="Mol. Microbiol.">
        <title>Differential gene expression during sporulation in Bacillus subtilis: structure and regulation of the spoIIID gene.</title>
        <authorList>
            <person name="Stevens C.M."/>
            <person name="Errington J."/>
        </authorList>
    </citation>
    <scope>NUCLEOTIDE SEQUENCE [GENOMIC DNA]</scope>
    <source>
        <strain>168</strain>
    </source>
</reference>
<reference key="3">
    <citation type="journal article" date="1997" name="Microbiology">
        <title>The Bacillus subtilis genome from gerBC (311 degrees) to licR (334 degrees).</title>
        <authorList>
            <person name="Presecan E."/>
            <person name="Moszer I."/>
            <person name="Boursier L."/>
            <person name="Cruz Ramos H."/>
            <person name="De La Fuente V."/>
            <person name="Hullo M.-F."/>
            <person name="Lelong C."/>
            <person name="Schleich S."/>
            <person name="Sekowska A."/>
            <person name="Song B.H."/>
            <person name="Villani G."/>
            <person name="Kunst F."/>
            <person name="Danchin A."/>
            <person name="Glaser P."/>
        </authorList>
    </citation>
    <scope>NUCLEOTIDE SEQUENCE [GENOMIC DNA]</scope>
    <source>
        <strain>168</strain>
    </source>
</reference>
<reference key="4">
    <citation type="journal article" date="1997" name="Nature">
        <title>The complete genome sequence of the Gram-positive bacterium Bacillus subtilis.</title>
        <authorList>
            <person name="Kunst F."/>
            <person name="Ogasawara N."/>
            <person name="Moszer I."/>
            <person name="Albertini A.M."/>
            <person name="Alloni G."/>
            <person name="Azevedo V."/>
            <person name="Bertero M.G."/>
            <person name="Bessieres P."/>
            <person name="Bolotin A."/>
            <person name="Borchert S."/>
            <person name="Borriss R."/>
            <person name="Boursier L."/>
            <person name="Brans A."/>
            <person name="Braun M."/>
            <person name="Brignell S.C."/>
            <person name="Bron S."/>
            <person name="Brouillet S."/>
            <person name="Bruschi C.V."/>
            <person name="Caldwell B."/>
            <person name="Capuano V."/>
            <person name="Carter N.M."/>
            <person name="Choi S.-K."/>
            <person name="Codani J.-J."/>
            <person name="Connerton I.F."/>
            <person name="Cummings N.J."/>
            <person name="Daniel R.A."/>
            <person name="Denizot F."/>
            <person name="Devine K.M."/>
            <person name="Duesterhoeft A."/>
            <person name="Ehrlich S.D."/>
            <person name="Emmerson P.T."/>
            <person name="Entian K.-D."/>
            <person name="Errington J."/>
            <person name="Fabret C."/>
            <person name="Ferrari E."/>
            <person name="Foulger D."/>
            <person name="Fritz C."/>
            <person name="Fujita M."/>
            <person name="Fujita Y."/>
            <person name="Fuma S."/>
            <person name="Galizzi A."/>
            <person name="Galleron N."/>
            <person name="Ghim S.-Y."/>
            <person name="Glaser P."/>
            <person name="Goffeau A."/>
            <person name="Golightly E.J."/>
            <person name="Grandi G."/>
            <person name="Guiseppi G."/>
            <person name="Guy B.J."/>
            <person name="Haga K."/>
            <person name="Haiech J."/>
            <person name="Harwood C.R."/>
            <person name="Henaut A."/>
            <person name="Hilbert H."/>
            <person name="Holsappel S."/>
            <person name="Hosono S."/>
            <person name="Hullo M.-F."/>
            <person name="Itaya M."/>
            <person name="Jones L.-M."/>
            <person name="Joris B."/>
            <person name="Karamata D."/>
            <person name="Kasahara Y."/>
            <person name="Klaerr-Blanchard M."/>
            <person name="Klein C."/>
            <person name="Kobayashi Y."/>
            <person name="Koetter P."/>
            <person name="Koningstein G."/>
            <person name="Krogh S."/>
            <person name="Kumano M."/>
            <person name="Kurita K."/>
            <person name="Lapidus A."/>
            <person name="Lardinois S."/>
            <person name="Lauber J."/>
            <person name="Lazarevic V."/>
            <person name="Lee S.-M."/>
            <person name="Levine A."/>
            <person name="Liu H."/>
            <person name="Masuda S."/>
            <person name="Mauel C."/>
            <person name="Medigue C."/>
            <person name="Medina N."/>
            <person name="Mellado R.P."/>
            <person name="Mizuno M."/>
            <person name="Moestl D."/>
            <person name="Nakai S."/>
            <person name="Noback M."/>
            <person name="Noone D."/>
            <person name="O'Reilly M."/>
            <person name="Ogawa K."/>
            <person name="Ogiwara A."/>
            <person name="Oudega B."/>
            <person name="Park S.-H."/>
            <person name="Parro V."/>
            <person name="Pohl T.M."/>
            <person name="Portetelle D."/>
            <person name="Porwollik S."/>
            <person name="Prescott A.M."/>
            <person name="Presecan E."/>
            <person name="Pujic P."/>
            <person name="Purnelle B."/>
            <person name="Rapoport G."/>
            <person name="Rey M."/>
            <person name="Reynolds S."/>
            <person name="Rieger M."/>
            <person name="Rivolta C."/>
            <person name="Rocha E."/>
            <person name="Roche B."/>
            <person name="Rose M."/>
            <person name="Sadaie Y."/>
            <person name="Sato T."/>
            <person name="Scanlan E."/>
            <person name="Schleich S."/>
            <person name="Schroeter R."/>
            <person name="Scoffone F."/>
            <person name="Sekiguchi J."/>
            <person name="Sekowska A."/>
            <person name="Seror S.J."/>
            <person name="Serror P."/>
            <person name="Shin B.-S."/>
            <person name="Soldo B."/>
            <person name="Sorokin A."/>
            <person name="Tacconi E."/>
            <person name="Takagi T."/>
            <person name="Takahashi H."/>
            <person name="Takemaru K."/>
            <person name="Takeuchi M."/>
            <person name="Tamakoshi A."/>
            <person name="Tanaka T."/>
            <person name="Terpstra P."/>
            <person name="Tognoni A."/>
            <person name="Tosato V."/>
            <person name="Uchiyama S."/>
            <person name="Vandenbol M."/>
            <person name="Vannier F."/>
            <person name="Vassarotti A."/>
            <person name="Viari A."/>
            <person name="Wambutt R."/>
            <person name="Wedler E."/>
            <person name="Wedler H."/>
            <person name="Weitzenegger T."/>
            <person name="Winters P."/>
            <person name="Wipat A."/>
            <person name="Yamamoto H."/>
            <person name="Yamane K."/>
            <person name="Yasumoto K."/>
            <person name="Yata K."/>
            <person name="Yoshida K."/>
            <person name="Yoshikawa H.-F."/>
            <person name="Zumstein E."/>
            <person name="Yoshikawa H."/>
            <person name="Danchin A."/>
        </authorList>
    </citation>
    <scope>NUCLEOTIDE SEQUENCE [LARGE SCALE GENOMIC DNA]</scope>
    <source>
        <strain>168</strain>
    </source>
</reference>
<reference key="5">
    <citation type="journal article" date="1989" name="Science">
        <title>Switch protein alters specificity of RNA polymerase containing a compartment-specific sigma factor.</title>
        <authorList>
            <person name="Kroos L."/>
            <person name="Kunkel B."/>
            <person name="Losick R."/>
        </authorList>
    </citation>
    <scope>PROTEIN SEQUENCE OF 1-34</scope>
</reference>
<gene>
    <name type="primary">spoIIID</name>
    <name type="ordered locus">BSU36420</name>
</gene>
<comment type="function">
    <text>This protein regulates the transcription of sigK, which encodes mother cell chamber RNA polymerase sigma-factor (sigma K).</text>
</comment>
<protein>
    <recommendedName>
        <fullName>Stage III sporulation protein D</fullName>
    </recommendedName>
    <alternativeName>
        <fullName>14 kDa transcription factor</fullName>
    </alternativeName>
</protein>